<dbReference type="EC" id="4.2.3.4" evidence="1"/>
<dbReference type="EMBL" id="CP000084">
    <property type="protein sequence ID" value="AAZ21274.1"/>
    <property type="molecule type" value="Genomic_DNA"/>
</dbReference>
<dbReference type="RefSeq" id="WP_011281720.1">
    <property type="nucleotide sequence ID" value="NC_007205.1"/>
</dbReference>
<dbReference type="SMR" id="Q4FNG5"/>
<dbReference type="STRING" id="335992.SAR11_0452"/>
<dbReference type="GeneID" id="66294952"/>
<dbReference type="KEGG" id="pub:SAR11_0452"/>
<dbReference type="eggNOG" id="COG0337">
    <property type="taxonomic scope" value="Bacteria"/>
</dbReference>
<dbReference type="HOGENOM" id="CLU_001201_0_1_5"/>
<dbReference type="OrthoDB" id="9806583at2"/>
<dbReference type="UniPathway" id="UPA00053">
    <property type="reaction ID" value="UER00085"/>
</dbReference>
<dbReference type="Proteomes" id="UP000002528">
    <property type="component" value="Chromosome"/>
</dbReference>
<dbReference type="GO" id="GO:0005737">
    <property type="term" value="C:cytoplasm"/>
    <property type="evidence" value="ECO:0007669"/>
    <property type="project" value="UniProtKB-SubCell"/>
</dbReference>
<dbReference type="GO" id="GO:0003856">
    <property type="term" value="F:3-dehydroquinate synthase activity"/>
    <property type="evidence" value="ECO:0007669"/>
    <property type="project" value="UniProtKB-UniRule"/>
</dbReference>
<dbReference type="GO" id="GO:0046872">
    <property type="term" value="F:metal ion binding"/>
    <property type="evidence" value="ECO:0007669"/>
    <property type="project" value="UniProtKB-KW"/>
</dbReference>
<dbReference type="GO" id="GO:0000166">
    <property type="term" value="F:nucleotide binding"/>
    <property type="evidence" value="ECO:0007669"/>
    <property type="project" value="UniProtKB-KW"/>
</dbReference>
<dbReference type="GO" id="GO:0008652">
    <property type="term" value="P:amino acid biosynthetic process"/>
    <property type="evidence" value="ECO:0007669"/>
    <property type="project" value="UniProtKB-KW"/>
</dbReference>
<dbReference type="GO" id="GO:0009073">
    <property type="term" value="P:aromatic amino acid family biosynthetic process"/>
    <property type="evidence" value="ECO:0007669"/>
    <property type="project" value="UniProtKB-KW"/>
</dbReference>
<dbReference type="GO" id="GO:0009423">
    <property type="term" value="P:chorismate biosynthetic process"/>
    <property type="evidence" value="ECO:0007669"/>
    <property type="project" value="UniProtKB-UniRule"/>
</dbReference>
<dbReference type="CDD" id="cd08195">
    <property type="entry name" value="DHQS"/>
    <property type="match status" value="1"/>
</dbReference>
<dbReference type="FunFam" id="3.40.50.1970:FF:000007">
    <property type="entry name" value="Pentafunctional AROM polypeptide"/>
    <property type="match status" value="1"/>
</dbReference>
<dbReference type="Gene3D" id="3.40.50.1970">
    <property type="match status" value="1"/>
</dbReference>
<dbReference type="Gene3D" id="1.20.1090.10">
    <property type="entry name" value="Dehydroquinate synthase-like - alpha domain"/>
    <property type="match status" value="1"/>
</dbReference>
<dbReference type="HAMAP" id="MF_00110">
    <property type="entry name" value="DHQ_synthase"/>
    <property type="match status" value="1"/>
</dbReference>
<dbReference type="InterPro" id="IPR050071">
    <property type="entry name" value="Dehydroquinate_synthase"/>
</dbReference>
<dbReference type="InterPro" id="IPR016037">
    <property type="entry name" value="DHQ_synth_AroB"/>
</dbReference>
<dbReference type="InterPro" id="IPR030963">
    <property type="entry name" value="DHQ_synth_fam"/>
</dbReference>
<dbReference type="InterPro" id="IPR030960">
    <property type="entry name" value="DHQS/DOIS_N"/>
</dbReference>
<dbReference type="InterPro" id="IPR056179">
    <property type="entry name" value="DHQS_C"/>
</dbReference>
<dbReference type="NCBIfam" id="TIGR01357">
    <property type="entry name" value="aroB"/>
    <property type="match status" value="1"/>
</dbReference>
<dbReference type="PANTHER" id="PTHR43622">
    <property type="entry name" value="3-DEHYDROQUINATE SYNTHASE"/>
    <property type="match status" value="1"/>
</dbReference>
<dbReference type="PANTHER" id="PTHR43622:SF1">
    <property type="entry name" value="3-DEHYDROQUINATE SYNTHASE"/>
    <property type="match status" value="1"/>
</dbReference>
<dbReference type="Pfam" id="PF01761">
    <property type="entry name" value="DHQ_synthase"/>
    <property type="match status" value="1"/>
</dbReference>
<dbReference type="Pfam" id="PF24621">
    <property type="entry name" value="DHQS_C"/>
    <property type="match status" value="1"/>
</dbReference>
<dbReference type="PIRSF" id="PIRSF001455">
    <property type="entry name" value="DHQ_synth"/>
    <property type="match status" value="1"/>
</dbReference>
<dbReference type="SUPFAM" id="SSF56796">
    <property type="entry name" value="Dehydroquinate synthase-like"/>
    <property type="match status" value="1"/>
</dbReference>
<reference key="1">
    <citation type="journal article" date="2005" name="Science">
        <title>Genome streamlining in a cosmopolitan oceanic bacterium.</title>
        <authorList>
            <person name="Giovannoni S.J."/>
            <person name="Tripp H.J."/>
            <person name="Givan S."/>
            <person name="Podar M."/>
            <person name="Vergin K.L."/>
            <person name="Baptista D."/>
            <person name="Bibbs L."/>
            <person name="Eads J."/>
            <person name="Richardson T.H."/>
            <person name="Noordewier M."/>
            <person name="Rappe M.S."/>
            <person name="Short J.M."/>
            <person name="Carrington J.C."/>
            <person name="Mathur E.J."/>
        </authorList>
    </citation>
    <scope>NUCLEOTIDE SEQUENCE [LARGE SCALE GENOMIC DNA]</scope>
    <source>
        <strain>HTCC1062</strain>
    </source>
</reference>
<name>AROB_PELUB</name>
<evidence type="ECO:0000255" key="1">
    <source>
        <dbReference type="HAMAP-Rule" id="MF_00110"/>
    </source>
</evidence>
<keyword id="KW-0028">Amino-acid biosynthesis</keyword>
<keyword id="KW-0057">Aromatic amino acid biosynthesis</keyword>
<keyword id="KW-0170">Cobalt</keyword>
<keyword id="KW-0963">Cytoplasm</keyword>
<keyword id="KW-0456">Lyase</keyword>
<keyword id="KW-0479">Metal-binding</keyword>
<keyword id="KW-0520">NAD</keyword>
<keyword id="KW-0547">Nucleotide-binding</keyword>
<keyword id="KW-1185">Reference proteome</keyword>
<keyword id="KW-0862">Zinc</keyword>
<comment type="function">
    <text evidence="1">Catalyzes the conversion of 3-deoxy-D-arabino-heptulosonate 7-phosphate (DAHP) to dehydroquinate (DHQ).</text>
</comment>
<comment type="catalytic activity">
    <reaction evidence="1">
        <text>7-phospho-2-dehydro-3-deoxy-D-arabino-heptonate = 3-dehydroquinate + phosphate</text>
        <dbReference type="Rhea" id="RHEA:21968"/>
        <dbReference type="ChEBI" id="CHEBI:32364"/>
        <dbReference type="ChEBI" id="CHEBI:43474"/>
        <dbReference type="ChEBI" id="CHEBI:58394"/>
        <dbReference type="EC" id="4.2.3.4"/>
    </reaction>
</comment>
<comment type="cofactor">
    <cofactor evidence="1">
        <name>Co(2+)</name>
        <dbReference type="ChEBI" id="CHEBI:48828"/>
    </cofactor>
    <cofactor evidence="1">
        <name>Zn(2+)</name>
        <dbReference type="ChEBI" id="CHEBI:29105"/>
    </cofactor>
    <text evidence="1">Binds 1 divalent metal cation per subunit. Can use either Co(2+) or Zn(2+).</text>
</comment>
<comment type="cofactor">
    <cofactor evidence="1">
        <name>NAD(+)</name>
        <dbReference type="ChEBI" id="CHEBI:57540"/>
    </cofactor>
</comment>
<comment type="pathway">
    <text evidence="1">Metabolic intermediate biosynthesis; chorismate biosynthesis; chorismate from D-erythrose 4-phosphate and phosphoenolpyruvate: step 2/7.</text>
</comment>
<comment type="subcellular location">
    <subcellularLocation>
        <location evidence="1">Cytoplasm</location>
    </subcellularLocation>
</comment>
<comment type="similarity">
    <text evidence="1">Belongs to the sugar phosphate cyclases superfamily. Dehydroquinate synthase family.</text>
</comment>
<sequence>MGLIKLKVNTNSQQYSIIIGNNILKKVNKFLKENSIDFNQCLLVIDKNIPKNLVKDTLKSLPKGSVSIHYFNASEKNKNLKSVNEITSILLKKSFNRNDCLISIGGGITGDVSGFAASTFKRGLKFVNIPTTLLSQVDSSIGGKTGVNTKYGKNLIGSFYQPSLVISDTNFLNSLPKREVVCGYGEILKHSLINGKKFFYFLNKNGKKIIQLKSPFIQTAIHQSCLIKKKVVEADEKELGIRKILNFGHTFAHAFEATLRYSAKLNHGEAVILGVKTAARFSLLNKILNKKEFELIDGHLNDLNLPRDINKFFSIKNLNTIISFMRKDKKNNTKKISLVLLKRIGSPVYKLQFNEKTINLFLKKELTK</sequence>
<protein>
    <recommendedName>
        <fullName evidence="1">3-dehydroquinate synthase</fullName>
        <shortName evidence="1">DHQS</shortName>
        <ecNumber evidence="1">4.2.3.4</ecNumber>
    </recommendedName>
</protein>
<gene>
    <name evidence="1" type="primary">aroB</name>
    <name type="ordered locus">SAR11_0452</name>
</gene>
<proteinExistence type="inferred from homology"/>
<organism>
    <name type="scientific">Pelagibacter ubique (strain HTCC1062)</name>
    <dbReference type="NCBI Taxonomy" id="335992"/>
    <lineage>
        <taxon>Bacteria</taxon>
        <taxon>Pseudomonadati</taxon>
        <taxon>Pseudomonadota</taxon>
        <taxon>Alphaproteobacteria</taxon>
        <taxon>Candidatus Pelagibacterales</taxon>
        <taxon>Candidatus Pelagibacteraceae</taxon>
        <taxon>Candidatus Pelagibacter</taxon>
    </lineage>
</organism>
<feature type="chain" id="PRO_0000231106" description="3-dehydroquinate synthase">
    <location>
        <begin position="1"/>
        <end position="368"/>
    </location>
</feature>
<feature type="binding site" evidence="1">
    <location>
        <begin position="131"/>
        <end position="132"/>
    </location>
    <ligand>
        <name>NAD(+)</name>
        <dbReference type="ChEBI" id="CHEBI:57540"/>
    </ligand>
</feature>
<feature type="binding site" evidence="1">
    <location>
        <position position="144"/>
    </location>
    <ligand>
        <name>NAD(+)</name>
        <dbReference type="ChEBI" id="CHEBI:57540"/>
    </ligand>
</feature>
<feature type="binding site" evidence="1">
    <location>
        <position position="153"/>
    </location>
    <ligand>
        <name>NAD(+)</name>
        <dbReference type="ChEBI" id="CHEBI:57540"/>
    </ligand>
</feature>
<feature type="binding site" evidence="1">
    <location>
        <position position="186"/>
    </location>
    <ligand>
        <name>Zn(2+)</name>
        <dbReference type="ChEBI" id="CHEBI:29105"/>
    </ligand>
</feature>
<feature type="binding site" evidence="1">
    <location>
        <position position="249"/>
    </location>
    <ligand>
        <name>Zn(2+)</name>
        <dbReference type="ChEBI" id="CHEBI:29105"/>
    </ligand>
</feature>
<feature type="binding site" evidence="1">
    <location>
        <position position="267"/>
    </location>
    <ligand>
        <name>Zn(2+)</name>
        <dbReference type="ChEBI" id="CHEBI:29105"/>
    </ligand>
</feature>
<accession>Q4FNG5</accession>